<comment type="function">
    <text evidence="1">Represses a number of genes involved in the response to DNA damage (SOS response), including recA and lexA. In the presence of single-stranded DNA, RecA interacts with LexA causing an autocatalytic cleavage which disrupts the DNA-binding part of LexA, leading to derepression of the SOS regulon and eventually DNA repair.</text>
</comment>
<comment type="catalytic activity">
    <reaction evidence="1">
        <text>Hydrolysis of Ala-|-Gly bond in repressor LexA.</text>
        <dbReference type="EC" id="3.4.21.88"/>
    </reaction>
</comment>
<comment type="subunit">
    <text evidence="1">Homodimer.</text>
</comment>
<comment type="similarity">
    <text evidence="1">Belongs to the peptidase S24 family.</text>
</comment>
<accession>Q0STQ8</accession>
<organism>
    <name type="scientific">Clostridium perfringens (strain SM101 / Type A)</name>
    <dbReference type="NCBI Taxonomy" id="289380"/>
    <lineage>
        <taxon>Bacteria</taxon>
        <taxon>Bacillati</taxon>
        <taxon>Bacillota</taxon>
        <taxon>Clostridia</taxon>
        <taxon>Eubacteriales</taxon>
        <taxon>Clostridiaceae</taxon>
        <taxon>Clostridium</taxon>
    </lineage>
</organism>
<feature type="chain" id="PRO_1000001279" description="LexA repressor">
    <location>
        <begin position="1"/>
        <end position="203"/>
    </location>
</feature>
<feature type="DNA-binding region" description="H-T-H motif" evidence="1">
    <location>
        <begin position="30"/>
        <end position="50"/>
    </location>
</feature>
<feature type="active site" description="For autocatalytic cleavage activity" evidence="1">
    <location>
        <position position="127"/>
    </location>
</feature>
<feature type="active site" description="For autocatalytic cleavage activity" evidence="1">
    <location>
        <position position="164"/>
    </location>
</feature>
<feature type="site" description="Cleavage; by autolysis" evidence="1">
    <location>
        <begin position="91"/>
        <end position="92"/>
    </location>
</feature>
<gene>
    <name evidence="1" type="primary">lexA</name>
    <name type="ordered locus">CPR_1177</name>
</gene>
<reference key="1">
    <citation type="journal article" date="2006" name="Genome Res.">
        <title>Skewed genomic variability in strains of the toxigenic bacterial pathogen, Clostridium perfringens.</title>
        <authorList>
            <person name="Myers G.S.A."/>
            <person name="Rasko D.A."/>
            <person name="Cheung J.K."/>
            <person name="Ravel J."/>
            <person name="Seshadri R."/>
            <person name="DeBoy R.T."/>
            <person name="Ren Q."/>
            <person name="Varga J."/>
            <person name="Awad M.M."/>
            <person name="Brinkac L.M."/>
            <person name="Daugherty S.C."/>
            <person name="Haft D.H."/>
            <person name="Dodson R.J."/>
            <person name="Madupu R."/>
            <person name="Nelson W.C."/>
            <person name="Rosovitz M.J."/>
            <person name="Sullivan S.A."/>
            <person name="Khouri H."/>
            <person name="Dimitrov G.I."/>
            <person name="Watkins K.L."/>
            <person name="Mulligan S."/>
            <person name="Benton J."/>
            <person name="Radune D."/>
            <person name="Fisher D.J."/>
            <person name="Atkins H.S."/>
            <person name="Hiscox T."/>
            <person name="Jost B.H."/>
            <person name="Billington S.J."/>
            <person name="Songer J.G."/>
            <person name="McClane B.A."/>
            <person name="Titball R.W."/>
            <person name="Rood J.I."/>
            <person name="Melville S.B."/>
            <person name="Paulsen I.T."/>
        </authorList>
    </citation>
    <scope>NUCLEOTIDE SEQUENCE [LARGE SCALE GENOMIC DNA]</scope>
    <source>
        <strain>SM101 / Type A</strain>
    </source>
</reference>
<dbReference type="EC" id="3.4.21.88" evidence="1"/>
<dbReference type="EMBL" id="CP000312">
    <property type="protein sequence ID" value="ABG87657.1"/>
    <property type="molecule type" value="Genomic_DNA"/>
</dbReference>
<dbReference type="RefSeq" id="WP_011592181.1">
    <property type="nucleotide sequence ID" value="NC_008262.1"/>
</dbReference>
<dbReference type="SMR" id="Q0STQ8"/>
<dbReference type="MEROPS" id="S24.001"/>
<dbReference type="KEGG" id="cpr:CPR_1177"/>
<dbReference type="Proteomes" id="UP000001824">
    <property type="component" value="Chromosome"/>
</dbReference>
<dbReference type="GO" id="GO:0003677">
    <property type="term" value="F:DNA binding"/>
    <property type="evidence" value="ECO:0007669"/>
    <property type="project" value="UniProtKB-UniRule"/>
</dbReference>
<dbReference type="GO" id="GO:0004252">
    <property type="term" value="F:serine-type endopeptidase activity"/>
    <property type="evidence" value="ECO:0007669"/>
    <property type="project" value="UniProtKB-UniRule"/>
</dbReference>
<dbReference type="GO" id="GO:0006281">
    <property type="term" value="P:DNA repair"/>
    <property type="evidence" value="ECO:0007669"/>
    <property type="project" value="UniProtKB-UniRule"/>
</dbReference>
<dbReference type="GO" id="GO:0006260">
    <property type="term" value="P:DNA replication"/>
    <property type="evidence" value="ECO:0007669"/>
    <property type="project" value="UniProtKB-UniRule"/>
</dbReference>
<dbReference type="GO" id="GO:0045892">
    <property type="term" value="P:negative regulation of DNA-templated transcription"/>
    <property type="evidence" value="ECO:0007669"/>
    <property type="project" value="UniProtKB-UniRule"/>
</dbReference>
<dbReference type="GO" id="GO:0006508">
    <property type="term" value="P:proteolysis"/>
    <property type="evidence" value="ECO:0007669"/>
    <property type="project" value="InterPro"/>
</dbReference>
<dbReference type="GO" id="GO:0009432">
    <property type="term" value="P:SOS response"/>
    <property type="evidence" value="ECO:0007669"/>
    <property type="project" value="UniProtKB-UniRule"/>
</dbReference>
<dbReference type="CDD" id="cd00090">
    <property type="entry name" value="HTH_ARSR"/>
    <property type="match status" value="1"/>
</dbReference>
<dbReference type="CDD" id="cd06529">
    <property type="entry name" value="S24_LexA-like"/>
    <property type="match status" value="1"/>
</dbReference>
<dbReference type="FunFam" id="2.10.109.10:FF:000001">
    <property type="entry name" value="LexA repressor"/>
    <property type="match status" value="1"/>
</dbReference>
<dbReference type="Gene3D" id="2.10.109.10">
    <property type="entry name" value="Umud Fragment, subunit A"/>
    <property type="match status" value="1"/>
</dbReference>
<dbReference type="Gene3D" id="1.10.10.10">
    <property type="entry name" value="Winged helix-like DNA-binding domain superfamily/Winged helix DNA-binding domain"/>
    <property type="match status" value="1"/>
</dbReference>
<dbReference type="HAMAP" id="MF_00015">
    <property type="entry name" value="LexA"/>
    <property type="match status" value="1"/>
</dbReference>
<dbReference type="InterPro" id="IPR011991">
    <property type="entry name" value="ArsR-like_HTH"/>
</dbReference>
<dbReference type="InterPro" id="IPR006200">
    <property type="entry name" value="LexA"/>
</dbReference>
<dbReference type="InterPro" id="IPR039418">
    <property type="entry name" value="LexA-like"/>
</dbReference>
<dbReference type="InterPro" id="IPR036286">
    <property type="entry name" value="LexA/Signal_pep-like_sf"/>
</dbReference>
<dbReference type="InterPro" id="IPR006199">
    <property type="entry name" value="LexA_DNA-bd_dom"/>
</dbReference>
<dbReference type="InterPro" id="IPR050077">
    <property type="entry name" value="LexA_repressor"/>
</dbReference>
<dbReference type="InterPro" id="IPR006197">
    <property type="entry name" value="Peptidase_S24_LexA"/>
</dbReference>
<dbReference type="InterPro" id="IPR015927">
    <property type="entry name" value="Peptidase_S24_S26A/B/C"/>
</dbReference>
<dbReference type="InterPro" id="IPR036388">
    <property type="entry name" value="WH-like_DNA-bd_sf"/>
</dbReference>
<dbReference type="InterPro" id="IPR036390">
    <property type="entry name" value="WH_DNA-bd_sf"/>
</dbReference>
<dbReference type="NCBIfam" id="TIGR00498">
    <property type="entry name" value="lexA"/>
    <property type="match status" value="1"/>
</dbReference>
<dbReference type="PANTHER" id="PTHR33516">
    <property type="entry name" value="LEXA REPRESSOR"/>
    <property type="match status" value="1"/>
</dbReference>
<dbReference type="PANTHER" id="PTHR33516:SF2">
    <property type="entry name" value="LEXA REPRESSOR-RELATED"/>
    <property type="match status" value="1"/>
</dbReference>
<dbReference type="Pfam" id="PF01726">
    <property type="entry name" value="LexA_DNA_bind"/>
    <property type="match status" value="1"/>
</dbReference>
<dbReference type="Pfam" id="PF00717">
    <property type="entry name" value="Peptidase_S24"/>
    <property type="match status" value="1"/>
</dbReference>
<dbReference type="PRINTS" id="PR00726">
    <property type="entry name" value="LEXASERPTASE"/>
</dbReference>
<dbReference type="SUPFAM" id="SSF51306">
    <property type="entry name" value="LexA/Signal peptidase"/>
    <property type="match status" value="1"/>
</dbReference>
<dbReference type="SUPFAM" id="SSF46785">
    <property type="entry name" value="Winged helix' DNA-binding domain"/>
    <property type="match status" value="1"/>
</dbReference>
<protein>
    <recommendedName>
        <fullName evidence="1">LexA repressor</fullName>
        <ecNumber evidence="1">3.4.21.88</ecNumber>
    </recommendedName>
</protein>
<keyword id="KW-0068">Autocatalytic cleavage</keyword>
<keyword id="KW-0227">DNA damage</keyword>
<keyword id="KW-0234">DNA repair</keyword>
<keyword id="KW-0235">DNA replication</keyword>
<keyword id="KW-0238">DNA-binding</keyword>
<keyword id="KW-0378">Hydrolase</keyword>
<keyword id="KW-0678">Repressor</keyword>
<keyword id="KW-0742">SOS response</keyword>
<keyword id="KW-0804">Transcription</keyword>
<keyword id="KW-0805">Transcription regulation</keyword>
<proteinExistence type="inferred from homology"/>
<sequence>MIIKENSDKQTQIYNFLIEFTKSKGYPPSVREICQAVSLKSTSTVHGHLKRLEKKGLIYRDPTKPRALEIVELSNEEKELIDIPIVGKVTAGMPILATENIEDMFQIPINYVKHNNDLFILKVTGDSMIEAGILDGDLAIIEQKNIATNGDIVVALIENEATIKRFFKENGFIRLQPENKNYEPIIVEDCSILGKLVGIYRAY</sequence>
<evidence type="ECO:0000255" key="1">
    <source>
        <dbReference type="HAMAP-Rule" id="MF_00015"/>
    </source>
</evidence>
<name>LEXA_CLOPS</name>